<reference key="1">
    <citation type="journal article" date="2002" name="Nat. Biotechnol.">
        <title>Genome sequence of the dissimilatory metal ion-reducing bacterium Shewanella oneidensis.</title>
        <authorList>
            <person name="Heidelberg J.F."/>
            <person name="Paulsen I.T."/>
            <person name="Nelson K.E."/>
            <person name="Gaidos E.J."/>
            <person name="Nelson W.C."/>
            <person name="Read T.D."/>
            <person name="Eisen J.A."/>
            <person name="Seshadri R."/>
            <person name="Ward N.L."/>
            <person name="Methe B.A."/>
            <person name="Clayton R.A."/>
            <person name="Meyer T."/>
            <person name="Tsapin A."/>
            <person name="Scott J."/>
            <person name="Beanan M.J."/>
            <person name="Brinkac L.M."/>
            <person name="Daugherty S.C."/>
            <person name="DeBoy R.T."/>
            <person name="Dodson R.J."/>
            <person name="Durkin A.S."/>
            <person name="Haft D.H."/>
            <person name="Kolonay J.F."/>
            <person name="Madupu R."/>
            <person name="Peterson J.D."/>
            <person name="Umayam L.A."/>
            <person name="White O."/>
            <person name="Wolf A.M."/>
            <person name="Vamathevan J.J."/>
            <person name="Weidman J.F."/>
            <person name="Impraim M."/>
            <person name="Lee K."/>
            <person name="Berry K.J."/>
            <person name="Lee C."/>
            <person name="Mueller J."/>
            <person name="Khouri H.M."/>
            <person name="Gill J."/>
            <person name="Utterback T.R."/>
            <person name="McDonald L.A."/>
            <person name="Feldblyum T.V."/>
            <person name="Smith H.O."/>
            <person name="Venter J.C."/>
            <person name="Nealson K.H."/>
            <person name="Fraser C.M."/>
        </authorList>
    </citation>
    <scope>NUCLEOTIDE SEQUENCE [LARGE SCALE GENOMIC DNA]</scope>
    <source>
        <strain>ATCC 700550 / JCM 31522 / CIP 106686 / LMG 19005 / NCIMB 14063 / MR-1</strain>
    </source>
</reference>
<name>MDTL_SHEON</name>
<proteinExistence type="inferred from homology"/>
<evidence type="ECO:0000250" key="1"/>
<evidence type="ECO:0000255" key="2"/>
<evidence type="ECO:0000305" key="3"/>
<keyword id="KW-0997">Cell inner membrane</keyword>
<keyword id="KW-1003">Cell membrane</keyword>
<keyword id="KW-0472">Membrane</keyword>
<keyword id="KW-1185">Reference proteome</keyword>
<keyword id="KW-0812">Transmembrane</keyword>
<keyword id="KW-1133">Transmembrane helix</keyword>
<keyword id="KW-0813">Transport</keyword>
<dbReference type="EMBL" id="AE014299">
    <property type="protein sequence ID" value="AAN56995.1"/>
    <property type="molecule type" value="Genomic_DNA"/>
</dbReference>
<dbReference type="RefSeq" id="NP_719551.1">
    <property type="nucleotide sequence ID" value="NC_004347.2"/>
</dbReference>
<dbReference type="RefSeq" id="WP_011073742.1">
    <property type="nucleotide sequence ID" value="NC_004347.2"/>
</dbReference>
<dbReference type="SMR" id="Q8EA87"/>
<dbReference type="STRING" id="211586.SO_4021"/>
<dbReference type="PaxDb" id="211586-SO_4021"/>
<dbReference type="KEGG" id="son:SO_4021"/>
<dbReference type="PATRIC" id="fig|1028802.3.peg.1167"/>
<dbReference type="eggNOG" id="COG2814">
    <property type="taxonomic scope" value="Bacteria"/>
</dbReference>
<dbReference type="HOGENOM" id="CLU_001265_47_1_6"/>
<dbReference type="OrthoDB" id="9814303at2"/>
<dbReference type="PhylomeDB" id="Q8EA87"/>
<dbReference type="BioCyc" id="SONE211586:G1GMP-3723-MONOMER"/>
<dbReference type="Proteomes" id="UP000008186">
    <property type="component" value="Chromosome"/>
</dbReference>
<dbReference type="GO" id="GO:0005886">
    <property type="term" value="C:plasma membrane"/>
    <property type="evidence" value="ECO:0000318"/>
    <property type="project" value="GO_Central"/>
</dbReference>
<dbReference type="GO" id="GO:0022857">
    <property type="term" value="F:transmembrane transporter activity"/>
    <property type="evidence" value="ECO:0000318"/>
    <property type="project" value="GO_Central"/>
</dbReference>
<dbReference type="GO" id="GO:1990961">
    <property type="term" value="P:xenobiotic detoxification by transmembrane export across the plasma membrane"/>
    <property type="evidence" value="ECO:0000318"/>
    <property type="project" value="GO_Central"/>
</dbReference>
<dbReference type="CDD" id="cd17320">
    <property type="entry name" value="MFS_MdfA_MDR_like"/>
    <property type="match status" value="1"/>
</dbReference>
<dbReference type="FunFam" id="1.20.1720.10:FF:000003">
    <property type="entry name" value="Multidrug resistance protein MdtL"/>
    <property type="match status" value="1"/>
</dbReference>
<dbReference type="Gene3D" id="1.20.1720.10">
    <property type="entry name" value="Multidrug resistance protein D"/>
    <property type="match status" value="1"/>
</dbReference>
<dbReference type="HAMAP" id="MF_01530">
    <property type="entry name" value="MFS_MdtL"/>
    <property type="match status" value="1"/>
</dbReference>
<dbReference type="InterPro" id="IPR011701">
    <property type="entry name" value="MFS"/>
</dbReference>
<dbReference type="InterPro" id="IPR020846">
    <property type="entry name" value="MFS_dom"/>
</dbReference>
<dbReference type="InterPro" id="IPR050189">
    <property type="entry name" value="MFS_Efflux_Transporters"/>
</dbReference>
<dbReference type="InterPro" id="IPR036259">
    <property type="entry name" value="MFS_trans_sf"/>
</dbReference>
<dbReference type="InterPro" id="IPR023697">
    <property type="entry name" value="Multidrug-R_MdtL"/>
</dbReference>
<dbReference type="NCBIfam" id="NF007782">
    <property type="entry name" value="PRK10473.1"/>
    <property type="match status" value="1"/>
</dbReference>
<dbReference type="PANTHER" id="PTHR43124:SF3">
    <property type="entry name" value="CHLORAMPHENICOL EFFLUX PUMP RV0191"/>
    <property type="match status" value="1"/>
</dbReference>
<dbReference type="PANTHER" id="PTHR43124">
    <property type="entry name" value="PURINE EFFLUX PUMP PBUE"/>
    <property type="match status" value="1"/>
</dbReference>
<dbReference type="Pfam" id="PF07690">
    <property type="entry name" value="MFS_1"/>
    <property type="match status" value="1"/>
</dbReference>
<dbReference type="SUPFAM" id="SSF103473">
    <property type="entry name" value="MFS general substrate transporter"/>
    <property type="match status" value="1"/>
</dbReference>
<dbReference type="PROSITE" id="PS50850">
    <property type="entry name" value="MFS"/>
    <property type="match status" value="1"/>
</dbReference>
<feature type="chain" id="PRO_0000173361" description="Multidrug resistance protein MdtL">
    <location>
        <begin position="1"/>
        <end position="396"/>
    </location>
</feature>
<feature type="topological domain" description="Cytoplasmic" evidence="2">
    <location>
        <begin position="1"/>
        <end position="4"/>
    </location>
</feature>
<feature type="transmembrane region" description="Helical" evidence="2">
    <location>
        <begin position="5"/>
        <end position="25"/>
    </location>
</feature>
<feature type="topological domain" description="Periplasmic" evidence="2">
    <location>
        <begin position="26"/>
        <end position="41"/>
    </location>
</feature>
<feature type="transmembrane region" description="Helical" evidence="2">
    <location>
        <begin position="42"/>
        <end position="62"/>
    </location>
</feature>
<feature type="topological domain" description="Cytoplasmic" evidence="2">
    <location>
        <begin position="63"/>
        <end position="68"/>
    </location>
</feature>
<feature type="transmembrane region" description="Helical" evidence="2">
    <location>
        <begin position="69"/>
        <end position="89"/>
    </location>
</feature>
<feature type="topological domain" description="Periplasmic" evidence="2">
    <location>
        <begin position="90"/>
        <end position="92"/>
    </location>
</feature>
<feature type="transmembrane region" description="Helical" evidence="2">
    <location>
        <begin position="93"/>
        <end position="113"/>
    </location>
</feature>
<feature type="topological domain" description="Cytoplasmic" evidence="2">
    <location>
        <begin position="114"/>
        <end position="131"/>
    </location>
</feature>
<feature type="transmembrane region" description="Helical" evidence="2">
    <location>
        <begin position="132"/>
        <end position="152"/>
    </location>
</feature>
<feature type="topological domain" description="Periplasmic" evidence="2">
    <location>
        <begin position="153"/>
        <end position="157"/>
    </location>
</feature>
<feature type="transmembrane region" description="Helical" evidence="2">
    <location>
        <begin position="158"/>
        <end position="178"/>
    </location>
</feature>
<feature type="topological domain" description="Cytoplasmic" evidence="2">
    <location>
        <begin position="179"/>
        <end position="209"/>
    </location>
</feature>
<feature type="transmembrane region" description="Helical" evidence="2">
    <location>
        <begin position="210"/>
        <end position="230"/>
    </location>
</feature>
<feature type="topological domain" description="Periplasmic" evidence="2">
    <location>
        <begin position="231"/>
        <end position="242"/>
    </location>
</feature>
<feature type="transmembrane region" description="Helical" evidence="2">
    <location>
        <begin position="243"/>
        <end position="263"/>
    </location>
</feature>
<feature type="topological domain" description="Cytoplasmic" evidence="2">
    <location>
        <begin position="264"/>
        <end position="270"/>
    </location>
</feature>
<feature type="transmembrane region" description="Helical" evidence="2">
    <location>
        <begin position="271"/>
        <end position="291"/>
    </location>
</feature>
<feature type="topological domain" description="Periplasmic" evidence="2">
    <location>
        <begin position="292"/>
        <end position="297"/>
    </location>
</feature>
<feature type="transmembrane region" description="Helical" evidence="2">
    <location>
        <begin position="298"/>
        <end position="318"/>
    </location>
</feature>
<feature type="topological domain" description="Cytoplasmic" evidence="2">
    <location>
        <begin position="319"/>
        <end position="333"/>
    </location>
</feature>
<feature type="transmembrane region" description="Helical" evidence="2">
    <location>
        <begin position="334"/>
        <end position="354"/>
    </location>
</feature>
<feature type="topological domain" description="Periplasmic" evidence="2">
    <location>
        <begin position="355"/>
        <end position="360"/>
    </location>
</feature>
<feature type="transmembrane region" description="Helical" evidence="2">
    <location>
        <begin position="361"/>
        <end position="381"/>
    </location>
</feature>
<feature type="topological domain" description="Cytoplasmic" evidence="2">
    <location>
        <begin position="382"/>
        <end position="396"/>
    </location>
</feature>
<comment type="subcellular location">
    <subcellularLocation>
        <location evidence="1">Cell inner membrane</location>
        <topology evidence="1">Multi-pass membrane protein</topology>
    </subcellularLocation>
</comment>
<comment type="similarity">
    <text evidence="3">Belongs to the major facilitator superfamily. DHA1 family. MdtL (TC 2.A.1.2.22) subfamily.</text>
</comment>
<organism>
    <name type="scientific">Shewanella oneidensis (strain ATCC 700550 / JCM 31522 / CIP 106686 / LMG 19005 / NCIMB 14063 / MR-1)</name>
    <dbReference type="NCBI Taxonomy" id="211586"/>
    <lineage>
        <taxon>Bacteria</taxon>
        <taxon>Pseudomonadati</taxon>
        <taxon>Pseudomonadota</taxon>
        <taxon>Gammaproteobacteria</taxon>
        <taxon>Alteromonadales</taxon>
        <taxon>Shewanellaceae</taxon>
        <taxon>Shewanella</taxon>
    </lineage>
</organism>
<accession>Q8EA87</accession>
<gene>
    <name type="primary">mdtL</name>
    <name type="ordered locus">SO_4021</name>
</gene>
<sequence>MFRYLLCSFGLVLMYPTGIDMYLVGLPQIASQLGASEAQLHIAFSVYLAGMATTMLFAGSLADRIGRKPITLFGALLFALASYFAAGSQTSDLFLIARFAQGIGAGCCYVVAFAILRDVLDDKRRAKVLSMVNGVTCIIPVIAPVIGHLIMLKFPWPSLFYTMAAMGLLVFALCLLVLRETHSKAAFHTQALPGVQRESFKQGFFISRLVITTLGVTTILSYVNVSPMLIMGQMGFDRGQYSNTMAMMALVSMLASFSTPFLLNRFKEKSLILFSQGLFVAAALVFILTQLGGVSHSFNLLGFAFVCSGFSIGFGVTMSQALSPFVARAGVASSLLGIAQVCTSALYIWVMGLLEVSAINILLLILSVGALVSITLMLAVPKMSEMVVNEQIPESA</sequence>
<protein>
    <recommendedName>
        <fullName>Multidrug resistance protein MdtL</fullName>
    </recommendedName>
</protein>